<gene>
    <name evidence="1" type="primary">nanR</name>
    <name type="ordered locus">SBG_2969</name>
</gene>
<sequence>MDVMNAFDSQAEDSPLSIGHSLRRRPLARKKLSEMVEEELEQMIRRHEFGEGEQLPSERELMAFFNVGRPSVREALAALKRKGLVQINNGERARVSRPSADTIISELSGMAKDFLSHPGGIAHFEQLRLFFESSLVRYAAEHATDEQIALLTKALEINSQSLDDNALFIRSDVEFHRVLAEIPGNPIFMAIHVALLDWLIAARPGVADRELHEHNNLSYQQHIAIVDAIRQRDPDKADRALQTHLNSVSATWHAFGKKNQKMR</sequence>
<feature type="chain" id="PRO_0000415301" description="HTH-type transcriptional repressor NanR">
    <location>
        <begin position="1"/>
        <end position="263"/>
    </location>
</feature>
<feature type="domain" description="HTH gntR-type" evidence="1">
    <location>
        <begin position="30"/>
        <end position="98"/>
    </location>
</feature>
<feature type="DNA-binding region" description="H-T-H motif" evidence="1">
    <location>
        <begin position="58"/>
        <end position="77"/>
    </location>
</feature>
<proteinExistence type="inferred from homology"/>
<keyword id="KW-0238">DNA-binding</keyword>
<keyword id="KW-0678">Repressor</keyword>
<keyword id="KW-0804">Transcription</keyword>
<keyword id="KW-0805">Transcription regulation</keyword>
<accession>F8VI19</accession>
<dbReference type="EMBL" id="FR877557">
    <property type="protein sequence ID" value="CCC32023.1"/>
    <property type="molecule type" value="Genomic_DNA"/>
</dbReference>
<dbReference type="RefSeq" id="WP_000382921.1">
    <property type="nucleotide sequence ID" value="NC_015761.1"/>
</dbReference>
<dbReference type="SMR" id="F8VI19"/>
<dbReference type="GeneID" id="66757683"/>
<dbReference type="KEGG" id="sbg:SBG_2969"/>
<dbReference type="eggNOG" id="COG2186">
    <property type="taxonomic scope" value="Bacteria"/>
</dbReference>
<dbReference type="Proteomes" id="UP000000289">
    <property type="component" value="Chromosome"/>
</dbReference>
<dbReference type="GO" id="GO:0003677">
    <property type="term" value="F:DNA binding"/>
    <property type="evidence" value="ECO:0007669"/>
    <property type="project" value="UniProtKB-KW"/>
</dbReference>
<dbReference type="GO" id="GO:0003700">
    <property type="term" value="F:DNA-binding transcription factor activity"/>
    <property type="evidence" value="ECO:0007669"/>
    <property type="project" value="UniProtKB-UniRule"/>
</dbReference>
<dbReference type="GO" id="GO:0045892">
    <property type="term" value="P:negative regulation of DNA-templated transcription"/>
    <property type="evidence" value="ECO:0007669"/>
    <property type="project" value="UniProtKB-UniRule"/>
</dbReference>
<dbReference type="CDD" id="cd07377">
    <property type="entry name" value="WHTH_GntR"/>
    <property type="match status" value="1"/>
</dbReference>
<dbReference type="FunFam" id="1.10.10.10:FF:000150">
    <property type="entry name" value="HTH-type transcriptional repressor NanR"/>
    <property type="match status" value="1"/>
</dbReference>
<dbReference type="Gene3D" id="1.20.120.530">
    <property type="entry name" value="GntR ligand-binding domain-like"/>
    <property type="match status" value="1"/>
</dbReference>
<dbReference type="Gene3D" id="1.10.10.10">
    <property type="entry name" value="Winged helix-like DNA-binding domain superfamily/Winged helix DNA-binding domain"/>
    <property type="match status" value="1"/>
</dbReference>
<dbReference type="HAMAP" id="MF_01236">
    <property type="entry name" value="HTH_NanR"/>
    <property type="match status" value="1"/>
</dbReference>
<dbReference type="InterPro" id="IPR011711">
    <property type="entry name" value="GntR_C"/>
</dbReference>
<dbReference type="InterPro" id="IPR008920">
    <property type="entry name" value="TF_FadR/GntR_C"/>
</dbReference>
<dbReference type="InterPro" id="IPR000524">
    <property type="entry name" value="Tscrpt_reg_HTH_GntR"/>
</dbReference>
<dbReference type="InterPro" id="IPR023730">
    <property type="entry name" value="Tscrpt_reg_NanR"/>
</dbReference>
<dbReference type="InterPro" id="IPR036388">
    <property type="entry name" value="WH-like_DNA-bd_sf"/>
</dbReference>
<dbReference type="InterPro" id="IPR036390">
    <property type="entry name" value="WH_DNA-bd_sf"/>
</dbReference>
<dbReference type="NCBIfam" id="NF003011">
    <property type="entry name" value="PRK03837.1"/>
    <property type="match status" value="1"/>
</dbReference>
<dbReference type="PANTHER" id="PTHR43537:SF53">
    <property type="entry name" value="HTH-TYPE TRANSCRIPTIONAL REPRESSOR NANR"/>
    <property type="match status" value="1"/>
</dbReference>
<dbReference type="PANTHER" id="PTHR43537">
    <property type="entry name" value="TRANSCRIPTIONAL REGULATOR, GNTR FAMILY"/>
    <property type="match status" value="1"/>
</dbReference>
<dbReference type="Pfam" id="PF07729">
    <property type="entry name" value="FCD"/>
    <property type="match status" value="1"/>
</dbReference>
<dbReference type="Pfam" id="PF00392">
    <property type="entry name" value="GntR"/>
    <property type="match status" value="1"/>
</dbReference>
<dbReference type="PRINTS" id="PR00035">
    <property type="entry name" value="HTHGNTR"/>
</dbReference>
<dbReference type="SMART" id="SM00895">
    <property type="entry name" value="FCD"/>
    <property type="match status" value="1"/>
</dbReference>
<dbReference type="SMART" id="SM00345">
    <property type="entry name" value="HTH_GNTR"/>
    <property type="match status" value="1"/>
</dbReference>
<dbReference type="SUPFAM" id="SSF48008">
    <property type="entry name" value="GntR ligand-binding domain-like"/>
    <property type="match status" value="1"/>
</dbReference>
<dbReference type="SUPFAM" id="SSF46785">
    <property type="entry name" value="Winged helix' DNA-binding domain"/>
    <property type="match status" value="1"/>
</dbReference>
<dbReference type="PROSITE" id="PS50949">
    <property type="entry name" value="HTH_GNTR"/>
    <property type="match status" value="1"/>
</dbReference>
<protein>
    <recommendedName>
        <fullName evidence="1">HTH-type transcriptional repressor NanR</fullName>
    </recommendedName>
</protein>
<evidence type="ECO:0000255" key="1">
    <source>
        <dbReference type="HAMAP-Rule" id="MF_01236"/>
    </source>
</evidence>
<comment type="function">
    <text evidence="1">Transcriptional repressor that controls expression of the genes required for the catabolism of sialic acids.</text>
</comment>
<comment type="similarity">
    <text evidence="1">Belongs to the NanR family.</text>
</comment>
<organism>
    <name type="scientific">Salmonella bongori (strain ATCC 43975 / DSM 13772 / NCTC 12419)</name>
    <dbReference type="NCBI Taxonomy" id="218493"/>
    <lineage>
        <taxon>Bacteria</taxon>
        <taxon>Pseudomonadati</taxon>
        <taxon>Pseudomonadota</taxon>
        <taxon>Gammaproteobacteria</taxon>
        <taxon>Enterobacterales</taxon>
        <taxon>Enterobacteriaceae</taxon>
        <taxon>Salmonella</taxon>
    </lineage>
</organism>
<reference key="1">
    <citation type="journal article" date="2011" name="PLoS Pathog.">
        <title>Salmonella bongori provides insights into the evolution of the Salmonellae.</title>
        <authorList>
            <person name="Fookes M."/>
            <person name="Schroeder G.N."/>
            <person name="Langridge G.C."/>
            <person name="Blondel C.J."/>
            <person name="Mammina C."/>
            <person name="Connor T.R."/>
            <person name="Seth-Smith H."/>
            <person name="Vernikos G.S."/>
            <person name="Robinson K.S."/>
            <person name="Sanders M."/>
            <person name="Petty N.K."/>
            <person name="Kingsley R.A."/>
            <person name="Baumler A.J."/>
            <person name="Nuccio S.P."/>
            <person name="Contreras I."/>
            <person name="Santiviago C.A."/>
            <person name="Maskell D."/>
            <person name="Barrow P."/>
            <person name="Humphrey T."/>
            <person name="Nastasi A."/>
            <person name="Roberts M."/>
            <person name="Frankel G."/>
            <person name="Parkhill J."/>
            <person name="Dougan G."/>
            <person name="Thomson N.R."/>
        </authorList>
    </citation>
    <scope>NUCLEOTIDE SEQUENCE [LARGE SCALE GENOMIC DNA]</scope>
    <source>
        <strain>ATCC 43975 / DSM 13772 / NCTC 12419</strain>
    </source>
</reference>
<name>NANR_SALBC</name>